<accession>Q07KN4</accession>
<sequence>MSKANTTNARRKNRVRMALRRTASGRPRLSVFRSSKHIYAQVIDDLKGVTLASASSLEKTMREAGNTGADIDAAKAVGKLLAERAVKNGVKEVVFDRGGYLYHGRIKALADAARESGLSF</sequence>
<reference key="1">
    <citation type="submission" date="2006-09" db="EMBL/GenBank/DDBJ databases">
        <title>Complete sequence of Rhodopseudomonas palustris BisA53.</title>
        <authorList>
            <consortium name="US DOE Joint Genome Institute"/>
            <person name="Copeland A."/>
            <person name="Lucas S."/>
            <person name="Lapidus A."/>
            <person name="Barry K."/>
            <person name="Detter J.C."/>
            <person name="Glavina del Rio T."/>
            <person name="Hammon N."/>
            <person name="Israni S."/>
            <person name="Dalin E."/>
            <person name="Tice H."/>
            <person name="Pitluck S."/>
            <person name="Chain P."/>
            <person name="Malfatti S."/>
            <person name="Shin M."/>
            <person name="Vergez L."/>
            <person name="Schmutz J."/>
            <person name="Larimer F."/>
            <person name="Land M."/>
            <person name="Hauser L."/>
            <person name="Pelletier D.A."/>
            <person name="Kyrpides N."/>
            <person name="Kim E."/>
            <person name="Harwood C.S."/>
            <person name="Oda Y."/>
            <person name="Richardson P."/>
        </authorList>
    </citation>
    <scope>NUCLEOTIDE SEQUENCE [LARGE SCALE GENOMIC DNA]</scope>
    <source>
        <strain>BisA53</strain>
    </source>
</reference>
<proteinExistence type="inferred from homology"/>
<dbReference type="EMBL" id="CP000463">
    <property type="protein sequence ID" value="ABJ07500.1"/>
    <property type="molecule type" value="Genomic_DNA"/>
</dbReference>
<dbReference type="SMR" id="Q07KN4"/>
<dbReference type="STRING" id="316055.RPE_3570"/>
<dbReference type="KEGG" id="rpe:RPE_3570"/>
<dbReference type="eggNOG" id="COG0256">
    <property type="taxonomic scope" value="Bacteria"/>
</dbReference>
<dbReference type="HOGENOM" id="CLU_098841_0_1_5"/>
<dbReference type="OrthoDB" id="9810939at2"/>
<dbReference type="GO" id="GO:0022625">
    <property type="term" value="C:cytosolic large ribosomal subunit"/>
    <property type="evidence" value="ECO:0007669"/>
    <property type="project" value="TreeGrafter"/>
</dbReference>
<dbReference type="GO" id="GO:0008097">
    <property type="term" value="F:5S rRNA binding"/>
    <property type="evidence" value="ECO:0007669"/>
    <property type="project" value="TreeGrafter"/>
</dbReference>
<dbReference type="GO" id="GO:0003735">
    <property type="term" value="F:structural constituent of ribosome"/>
    <property type="evidence" value="ECO:0007669"/>
    <property type="project" value="InterPro"/>
</dbReference>
<dbReference type="GO" id="GO:0006412">
    <property type="term" value="P:translation"/>
    <property type="evidence" value="ECO:0007669"/>
    <property type="project" value="UniProtKB-UniRule"/>
</dbReference>
<dbReference type="CDD" id="cd00432">
    <property type="entry name" value="Ribosomal_L18_L5e"/>
    <property type="match status" value="1"/>
</dbReference>
<dbReference type="FunFam" id="3.30.420.100:FF:000001">
    <property type="entry name" value="50S ribosomal protein L18"/>
    <property type="match status" value="1"/>
</dbReference>
<dbReference type="Gene3D" id="3.30.420.100">
    <property type="match status" value="1"/>
</dbReference>
<dbReference type="HAMAP" id="MF_01337_B">
    <property type="entry name" value="Ribosomal_uL18_B"/>
    <property type="match status" value="1"/>
</dbReference>
<dbReference type="InterPro" id="IPR004389">
    <property type="entry name" value="Ribosomal_uL18_bac-type"/>
</dbReference>
<dbReference type="InterPro" id="IPR005484">
    <property type="entry name" value="Ribosomal_uL18_bac/euk"/>
</dbReference>
<dbReference type="NCBIfam" id="TIGR00060">
    <property type="entry name" value="L18_bact"/>
    <property type="match status" value="1"/>
</dbReference>
<dbReference type="PANTHER" id="PTHR12899">
    <property type="entry name" value="39S RIBOSOMAL PROTEIN L18, MITOCHONDRIAL"/>
    <property type="match status" value="1"/>
</dbReference>
<dbReference type="PANTHER" id="PTHR12899:SF3">
    <property type="entry name" value="LARGE RIBOSOMAL SUBUNIT PROTEIN UL18M"/>
    <property type="match status" value="1"/>
</dbReference>
<dbReference type="Pfam" id="PF00861">
    <property type="entry name" value="Ribosomal_L18p"/>
    <property type="match status" value="1"/>
</dbReference>
<dbReference type="SUPFAM" id="SSF53137">
    <property type="entry name" value="Translational machinery components"/>
    <property type="match status" value="1"/>
</dbReference>
<organism>
    <name type="scientific">Rhodopseudomonas palustris (strain BisA53)</name>
    <dbReference type="NCBI Taxonomy" id="316055"/>
    <lineage>
        <taxon>Bacteria</taxon>
        <taxon>Pseudomonadati</taxon>
        <taxon>Pseudomonadota</taxon>
        <taxon>Alphaproteobacteria</taxon>
        <taxon>Hyphomicrobiales</taxon>
        <taxon>Nitrobacteraceae</taxon>
        <taxon>Rhodopseudomonas</taxon>
    </lineage>
</organism>
<keyword id="KW-0687">Ribonucleoprotein</keyword>
<keyword id="KW-0689">Ribosomal protein</keyword>
<keyword id="KW-0694">RNA-binding</keyword>
<keyword id="KW-0699">rRNA-binding</keyword>
<name>RL18_RHOP5</name>
<feature type="chain" id="PRO_1000053095" description="Large ribosomal subunit protein uL18">
    <location>
        <begin position="1"/>
        <end position="120"/>
    </location>
</feature>
<gene>
    <name evidence="1" type="primary">rplR</name>
    <name type="ordered locus">RPE_3570</name>
</gene>
<comment type="function">
    <text evidence="1">This is one of the proteins that bind and probably mediate the attachment of the 5S RNA into the large ribosomal subunit, where it forms part of the central protuberance.</text>
</comment>
<comment type="subunit">
    <text evidence="1">Part of the 50S ribosomal subunit; part of the 5S rRNA/L5/L18/L25 subcomplex. Contacts the 5S and 23S rRNAs.</text>
</comment>
<comment type="similarity">
    <text evidence="1">Belongs to the universal ribosomal protein uL18 family.</text>
</comment>
<evidence type="ECO:0000255" key="1">
    <source>
        <dbReference type="HAMAP-Rule" id="MF_01337"/>
    </source>
</evidence>
<evidence type="ECO:0000305" key="2"/>
<protein>
    <recommendedName>
        <fullName evidence="1">Large ribosomal subunit protein uL18</fullName>
    </recommendedName>
    <alternativeName>
        <fullName evidence="2">50S ribosomal protein L18</fullName>
    </alternativeName>
</protein>